<dbReference type="EC" id="2.5.1.145" evidence="1"/>
<dbReference type="EMBL" id="AM295250">
    <property type="protein sequence ID" value="CAL27324.1"/>
    <property type="molecule type" value="Genomic_DNA"/>
</dbReference>
<dbReference type="RefSeq" id="WP_015899668.1">
    <property type="nucleotide sequence ID" value="NC_012121.1"/>
</dbReference>
<dbReference type="SMR" id="B9DJL7"/>
<dbReference type="GeneID" id="93795339"/>
<dbReference type="KEGG" id="sca:SCA_0410"/>
<dbReference type="eggNOG" id="COG0682">
    <property type="taxonomic scope" value="Bacteria"/>
</dbReference>
<dbReference type="HOGENOM" id="CLU_013386_0_1_9"/>
<dbReference type="OrthoDB" id="871140at2"/>
<dbReference type="BioCyc" id="SCAR396513:SCA_RS02085-MONOMER"/>
<dbReference type="UniPathway" id="UPA00664"/>
<dbReference type="Proteomes" id="UP000000444">
    <property type="component" value="Chromosome"/>
</dbReference>
<dbReference type="GO" id="GO:0005886">
    <property type="term" value="C:plasma membrane"/>
    <property type="evidence" value="ECO:0007669"/>
    <property type="project" value="UniProtKB-SubCell"/>
</dbReference>
<dbReference type="GO" id="GO:0008961">
    <property type="term" value="F:phosphatidylglycerol-prolipoprotein diacylglyceryl transferase activity"/>
    <property type="evidence" value="ECO:0007669"/>
    <property type="project" value="UniProtKB-UniRule"/>
</dbReference>
<dbReference type="GO" id="GO:0042158">
    <property type="term" value="P:lipoprotein biosynthetic process"/>
    <property type="evidence" value="ECO:0007669"/>
    <property type="project" value="UniProtKB-UniRule"/>
</dbReference>
<dbReference type="HAMAP" id="MF_01147">
    <property type="entry name" value="Lgt"/>
    <property type="match status" value="1"/>
</dbReference>
<dbReference type="InterPro" id="IPR001640">
    <property type="entry name" value="Lgt"/>
</dbReference>
<dbReference type="NCBIfam" id="TIGR00544">
    <property type="entry name" value="lgt"/>
    <property type="match status" value="1"/>
</dbReference>
<dbReference type="PANTHER" id="PTHR30589:SF0">
    <property type="entry name" value="PHOSPHATIDYLGLYCEROL--PROLIPOPROTEIN DIACYLGLYCERYL TRANSFERASE"/>
    <property type="match status" value="1"/>
</dbReference>
<dbReference type="PANTHER" id="PTHR30589">
    <property type="entry name" value="PROLIPOPROTEIN DIACYLGLYCERYL TRANSFERASE"/>
    <property type="match status" value="1"/>
</dbReference>
<dbReference type="Pfam" id="PF01790">
    <property type="entry name" value="LGT"/>
    <property type="match status" value="1"/>
</dbReference>
<dbReference type="PROSITE" id="PS01311">
    <property type="entry name" value="LGT"/>
    <property type="match status" value="1"/>
</dbReference>
<evidence type="ECO:0000255" key="1">
    <source>
        <dbReference type="HAMAP-Rule" id="MF_01147"/>
    </source>
</evidence>
<protein>
    <recommendedName>
        <fullName evidence="1">Phosphatidylglycerol--prolipoprotein diacylglyceryl transferase</fullName>
        <ecNumber evidence="1">2.5.1.145</ecNumber>
    </recommendedName>
</protein>
<feature type="chain" id="PRO_1000164148" description="Phosphatidylglycerol--prolipoprotein diacylglyceryl transferase">
    <location>
        <begin position="1"/>
        <end position="275"/>
    </location>
</feature>
<feature type="transmembrane region" description="Helical" evidence="1">
    <location>
        <begin position="18"/>
        <end position="38"/>
    </location>
</feature>
<feature type="transmembrane region" description="Helical" evidence="1">
    <location>
        <begin position="55"/>
        <end position="75"/>
    </location>
</feature>
<feature type="transmembrane region" description="Helical" evidence="1">
    <location>
        <begin position="89"/>
        <end position="109"/>
    </location>
</feature>
<feature type="transmembrane region" description="Helical" evidence="1">
    <location>
        <begin position="203"/>
        <end position="223"/>
    </location>
</feature>
<feature type="transmembrane region" description="Helical" evidence="1">
    <location>
        <begin position="235"/>
        <end position="255"/>
    </location>
</feature>
<feature type="binding site" evidence="1">
    <location>
        <position position="137"/>
    </location>
    <ligand>
        <name>a 1,2-diacyl-sn-glycero-3-phospho-(1'-sn-glycerol)</name>
        <dbReference type="ChEBI" id="CHEBI:64716"/>
    </ligand>
</feature>
<proteinExistence type="inferred from homology"/>
<sequence length="275" mass="31289">MISNLAYIDPVAFQLGPIEVHWYGIIIAAGILLGYFIAQEGAKRAGLHKDALVDIIFWSAIFGFITARIYFVIFQWPYYAANPAEIPMIWHGGIAIHGGLIGGFITGVIICRRNNHNPLQVGDIIAPSIILAQGIGRWGNFMNHEAHGGPVAKSVLENMHIPEFIINNMYIDGRYYQPTFLYESIWDVLGFALLLFLRKHLRIGETFFTYLIWYSIGRFFVEGLRTDSLMLTSNIRVAQLVSILLILIGIAMIIYRRFKYQPPKYKDVKALPWPK</sequence>
<accession>B9DJL7</accession>
<reference key="1">
    <citation type="journal article" date="2009" name="Appl. Environ. Microbiol.">
        <title>Genome analysis of the meat starter culture bacterium Staphylococcus carnosus TM300.</title>
        <authorList>
            <person name="Rosenstein R."/>
            <person name="Nerz C."/>
            <person name="Biswas L."/>
            <person name="Resch A."/>
            <person name="Raddatz G."/>
            <person name="Schuster S.C."/>
            <person name="Goetz F."/>
        </authorList>
    </citation>
    <scope>NUCLEOTIDE SEQUENCE [LARGE SCALE GENOMIC DNA]</scope>
    <source>
        <strain>TM300</strain>
    </source>
</reference>
<organism>
    <name type="scientific">Staphylococcus carnosus (strain TM300)</name>
    <dbReference type="NCBI Taxonomy" id="396513"/>
    <lineage>
        <taxon>Bacteria</taxon>
        <taxon>Bacillati</taxon>
        <taxon>Bacillota</taxon>
        <taxon>Bacilli</taxon>
        <taxon>Bacillales</taxon>
        <taxon>Staphylococcaceae</taxon>
        <taxon>Staphylococcus</taxon>
    </lineage>
</organism>
<gene>
    <name evidence="1" type="primary">lgt</name>
    <name type="ordered locus">Sca_0410</name>
</gene>
<name>LGT_STACT</name>
<keyword id="KW-1003">Cell membrane</keyword>
<keyword id="KW-0472">Membrane</keyword>
<keyword id="KW-1185">Reference proteome</keyword>
<keyword id="KW-0808">Transferase</keyword>
<keyword id="KW-0812">Transmembrane</keyword>
<keyword id="KW-1133">Transmembrane helix</keyword>
<comment type="function">
    <text evidence="1">Catalyzes the transfer of the diacylglyceryl group from phosphatidylglycerol to the sulfhydryl group of the N-terminal cysteine of a prolipoprotein, the first step in the formation of mature lipoproteins.</text>
</comment>
<comment type="catalytic activity">
    <reaction evidence="1">
        <text>L-cysteinyl-[prolipoprotein] + a 1,2-diacyl-sn-glycero-3-phospho-(1'-sn-glycerol) = an S-1,2-diacyl-sn-glyceryl-L-cysteinyl-[prolipoprotein] + sn-glycerol 1-phosphate + H(+)</text>
        <dbReference type="Rhea" id="RHEA:56712"/>
        <dbReference type="Rhea" id="RHEA-COMP:14679"/>
        <dbReference type="Rhea" id="RHEA-COMP:14680"/>
        <dbReference type="ChEBI" id="CHEBI:15378"/>
        <dbReference type="ChEBI" id="CHEBI:29950"/>
        <dbReference type="ChEBI" id="CHEBI:57685"/>
        <dbReference type="ChEBI" id="CHEBI:64716"/>
        <dbReference type="ChEBI" id="CHEBI:140658"/>
        <dbReference type="EC" id="2.5.1.145"/>
    </reaction>
</comment>
<comment type="pathway">
    <text evidence="1">Protein modification; lipoprotein biosynthesis (diacylglyceryl transfer).</text>
</comment>
<comment type="subcellular location">
    <subcellularLocation>
        <location evidence="1">Cell membrane</location>
        <topology evidence="1">Multi-pass membrane protein</topology>
    </subcellularLocation>
</comment>
<comment type="similarity">
    <text evidence="1">Belongs to the Lgt family.</text>
</comment>